<evidence type="ECO:0000250" key="1">
    <source>
        <dbReference type="UniProtKB" id="P08708"/>
    </source>
</evidence>
<evidence type="ECO:0000250" key="2">
    <source>
        <dbReference type="UniProtKB" id="P63276"/>
    </source>
</evidence>
<evidence type="ECO:0000305" key="3"/>
<reference key="1">
    <citation type="submission" date="2007-06" db="EMBL/GenBank/DDBJ databases">
        <authorList>
            <consortium name="NIH - Mammalian Gene Collection (MGC) project"/>
        </authorList>
    </citation>
    <scope>NUCLEOTIDE SEQUENCE [LARGE SCALE MRNA]</scope>
    <source>
        <strain>Crossbred X Angus</strain>
        <strain>Hereford</strain>
        <tissue>Hypothalamus</tissue>
        <tissue>Ileum</tissue>
    </source>
</reference>
<gene>
    <name type="primary">RPS17</name>
</gene>
<protein>
    <recommendedName>
        <fullName evidence="3">Small ribosomal subunit protein eS17</fullName>
    </recommendedName>
    <alternativeName>
        <fullName>40S ribosomal protein S17</fullName>
    </alternativeName>
</protein>
<name>RS17_BOVIN</name>
<accession>A5PK63</accession>
<accession>A6QLM6</accession>
<dbReference type="EMBL" id="BC142374">
    <property type="protein sequence ID" value="AAI42375.1"/>
    <property type="molecule type" value="mRNA"/>
</dbReference>
<dbReference type="EMBL" id="BC148018">
    <property type="protein sequence ID" value="AAI48019.1"/>
    <property type="molecule type" value="mRNA"/>
</dbReference>
<dbReference type="RefSeq" id="NP_001092680.1">
    <property type="nucleotide sequence ID" value="NM_001099210.2"/>
</dbReference>
<dbReference type="SMR" id="A5PK63"/>
<dbReference type="FunCoup" id="A5PK63">
    <property type="interactions" value="533"/>
</dbReference>
<dbReference type="STRING" id="9913.ENSBTAP00000000814"/>
<dbReference type="PaxDb" id="9913-ENSBTAP00000000814"/>
<dbReference type="PeptideAtlas" id="A5PK63"/>
<dbReference type="GeneID" id="788861"/>
<dbReference type="KEGG" id="bta:788861"/>
<dbReference type="CTD" id="6218"/>
<dbReference type="eggNOG" id="KOG0187">
    <property type="taxonomic scope" value="Eukaryota"/>
</dbReference>
<dbReference type="HOGENOM" id="CLU_112958_1_1_1"/>
<dbReference type="InParanoid" id="A5PK63"/>
<dbReference type="OrthoDB" id="1727351at2759"/>
<dbReference type="TreeFam" id="TF317992"/>
<dbReference type="Proteomes" id="UP000009136">
    <property type="component" value="Unplaced"/>
</dbReference>
<dbReference type="GO" id="GO:0022626">
    <property type="term" value="C:cytosolic ribosome"/>
    <property type="evidence" value="ECO:0007669"/>
    <property type="project" value="UniProtKB-ARBA"/>
</dbReference>
<dbReference type="GO" id="GO:0005730">
    <property type="term" value="C:nucleolus"/>
    <property type="evidence" value="ECO:0007669"/>
    <property type="project" value="UniProtKB-SubCell"/>
</dbReference>
<dbReference type="GO" id="GO:0032040">
    <property type="term" value="C:small-subunit processome"/>
    <property type="evidence" value="ECO:0000250"/>
    <property type="project" value="UniProtKB"/>
</dbReference>
<dbReference type="GO" id="GO:0003735">
    <property type="term" value="F:structural constituent of ribosome"/>
    <property type="evidence" value="ECO:0007669"/>
    <property type="project" value="InterPro"/>
</dbReference>
<dbReference type="GO" id="GO:0042274">
    <property type="term" value="P:ribosomal small subunit biogenesis"/>
    <property type="evidence" value="ECO:0000250"/>
    <property type="project" value="UniProtKB"/>
</dbReference>
<dbReference type="GO" id="GO:0006412">
    <property type="term" value="P:translation"/>
    <property type="evidence" value="ECO:0007669"/>
    <property type="project" value="InterPro"/>
</dbReference>
<dbReference type="FunFam" id="1.10.60.20:FF:000001">
    <property type="entry name" value="40S ribosomal protein S17"/>
    <property type="match status" value="1"/>
</dbReference>
<dbReference type="Gene3D" id="1.10.60.20">
    <property type="entry name" value="Ribosomal protein S17e-like"/>
    <property type="match status" value="1"/>
</dbReference>
<dbReference type="HAMAP" id="MF_00511">
    <property type="entry name" value="Ribosomal_eS17"/>
    <property type="match status" value="1"/>
</dbReference>
<dbReference type="InterPro" id="IPR001210">
    <property type="entry name" value="Ribosomal_eS17"/>
</dbReference>
<dbReference type="InterPro" id="IPR018273">
    <property type="entry name" value="Ribosomal_eS17_CS"/>
</dbReference>
<dbReference type="InterPro" id="IPR036401">
    <property type="entry name" value="Ribosomal_eS17_sf"/>
</dbReference>
<dbReference type="NCBIfam" id="NF002242">
    <property type="entry name" value="PRK01151.1"/>
    <property type="match status" value="1"/>
</dbReference>
<dbReference type="PANTHER" id="PTHR10732">
    <property type="entry name" value="40S RIBOSOMAL PROTEIN S17"/>
    <property type="match status" value="1"/>
</dbReference>
<dbReference type="PANTHER" id="PTHR10732:SF14">
    <property type="entry name" value="SMALL RIBOSOMAL SUBUNIT PROTEIN ES17"/>
    <property type="match status" value="1"/>
</dbReference>
<dbReference type="Pfam" id="PF00833">
    <property type="entry name" value="Ribosomal_S17e"/>
    <property type="match status" value="1"/>
</dbReference>
<dbReference type="SUPFAM" id="SSF116820">
    <property type="entry name" value="Rps17e-like"/>
    <property type="match status" value="1"/>
</dbReference>
<dbReference type="PROSITE" id="PS00712">
    <property type="entry name" value="RIBOSOMAL_S17E"/>
    <property type="match status" value="1"/>
</dbReference>
<proteinExistence type="evidence at transcript level"/>
<sequence>MGRVRTKTVKKAARVIIEKYYTRLDNDFHTNKRVCEEIAIIPSKKLRNKIAGYVTHLMKRIQRGPVRGISIKLQEEERERRDNYVPEVSALDQEIIEVDPDTKEMLKLLDFGSLSNLQVTQPTVGMNFKTPRGAV</sequence>
<keyword id="KW-0963">Cytoplasm</keyword>
<keyword id="KW-1017">Isopeptide bond</keyword>
<keyword id="KW-0539">Nucleus</keyword>
<keyword id="KW-0597">Phosphoprotein</keyword>
<keyword id="KW-1185">Reference proteome</keyword>
<keyword id="KW-0687">Ribonucleoprotein</keyword>
<keyword id="KW-0689">Ribosomal protein</keyword>
<keyword id="KW-0832">Ubl conjugation</keyword>
<feature type="chain" id="PRO_0000315211" description="Small ribosomal subunit protein eS17">
    <location>
        <begin position="1"/>
        <end position="135"/>
    </location>
</feature>
<feature type="modified residue" description="N6-succinyllysine" evidence="2">
    <location>
        <position position="19"/>
    </location>
</feature>
<feature type="modified residue" description="Phosphoserine" evidence="1">
    <location>
        <position position="113"/>
    </location>
</feature>
<feature type="modified residue" description="Phosphothreonine" evidence="1">
    <location>
        <position position="130"/>
    </location>
</feature>
<feature type="cross-link" description="Glycyl lysine isopeptide (Lys-Gly) (interchain with G-Cter in SUMO1); alternate" evidence="1">
    <location>
        <position position="103"/>
    </location>
</feature>
<feature type="cross-link" description="Glycyl lysine isopeptide (Lys-Gly) (interchain with G-Cter in SUMO2); alternate" evidence="1">
    <location>
        <position position="103"/>
    </location>
</feature>
<feature type="sequence conflict" description="In Ref. 1; AAI48019." evidence="3" ref="1">
    <original>D</original>
    <variation>G</variation>
    <location>
        <position position="25"/>
    </location>
</feature>
<organism>
    <name type="scientific">Bos taurus</name>
    <name type="common">Bovine</name>
    <dbReference type="NCBI Taxonomy" id="9913"/>
    <lineage>
        <taxon>Eukaryota</taxon>
        <taxon>Metazoa</taxon>
        <taxon>Chordata</taxon>
        <taxon>Craniata</taxon>
        <taxon>Vertebrata</taxon>
        <taxon>Euteleostomi</taxon>
        <taxon>Mammalia</taxon>
        <taxon>Eutheria</taxon>
        <taxon>Laurasiatheria</taxon>
        <taxon>Artiodactyla</taxon>
        <taxon>Ruminantia</taxon>
        <taxon>Pecora</taxon>
        <taxon>Bovidae</taxon>
        <taxon>Bovinae</taxon>
        <taxon>Bos</taxon>
    </lineage>
</organism>
<comment type="function">
    <text evidence="1">Component of the small ribosomal subunit. The ribosome is a large ribonucleoprotein complex responsible for the synthesis of proteins in the cell. Part of the small subunit (SSU) processome, first precursor of the small eukaryotic ribosomal subunit. During the assembly of the SSU processome in the nucleolus, many ribosome biogenesis factors, an RNA chaperone and ribosomal proteins associate with the nascent pre-rRNA and work in concert to generate RNA folding, modifications, rearrangements and cleavage as well as targeted degradation of pre-ribosomal RNA by the RNA exosome.</text>
</comment>
<comment type="subunit">
    <text evidence="1">Component of the small ribosomal subunit. Part of the small subunit (SSU) processome, composed of more than 70 proteins and the RNA chaperone small nucleolar RNA (snoRNA) U3.</text>
</comment>
<comment type="subcellular location">
    <subcellularLocation>
        <location evidence="1">Cytoplasm</location>
    </subcellularLocation>
    <subcellularLocation>
        <location evidence="1">Nucleus</location>
        <location evidence="1">Nucleolus</location>
    </subcellularLocation>
</comment>
<comment type="PTM">
    <text evidence="1">Ubiquitinated at Lys-103 by RNF14 and RNF25 in response to ribosome collisions (ribosome stalling).</text>
</comment>
<comment type="similarity">
    <text evidence="3">Belongs to the eukaryotic ribosomal protein eS17 family.</text>
</comment>